<dbReference type="EC" id="4.1.1.84" evidence="2"/>
<dbReference type="EMBL" id="AJ719424">
    <property type="protein sequence ID" value="CAG31083.1"/>
    <property type="molecule type" value="mRNA"/>
</dbReference>
<dbReference type="RefSeq" id="NP_001025838.1">
    <property type="nucleotide sequence ID" value="NM_001030667.1"/>
</dbReference>
<dbReference type="SMR" id="Q5ZMG0"/>
<dbReference type="FunCoup" id="Q5ZMG0">
    <property type="interactions" value="333"/>
</dbReference>
<dbReference type="STRING" id="9031.ENSGALP00000010251"/>
<dbReference type="GlyGen" id="Q5ZMG0">
    <property type="glycosylation" value="1 site"/>
</dbReference>
<dbReference type="PaxDb" id="9031-ENSGALP00000010251"/>
<dbReference type="GeneID" id="416937"/>
<dbReference type="KEGG" id="gga:416937"/>
<dbReference type="CTD" id="100037417"/>
<dbReference type="VEuPathDB" id="HostDB:geneid_416937"/>
<dbReference type="eggNOG" id="KOG1759">
    <property type="taxonomic scope" value="Eukaryota"/>
</dbReference>
<dbReference type="InParanoid" id="Q5ZMG0"/>
<dbReference type="OrthoDB" id="6080988at2759"/>
<dbReference type="PhylomeDB" id="Q5ZMG0"/>
<dbReference type="PRO" id="PR:Q5ZMG0"/>
<dbReference type="Proteomes" id="UP000000539">
    <property type="component" value="Unassembled WGS sequence"/>
</dbReference>
<dbReference type="GO" id="GO:0005737">
    <property type="term" value="C:cytoplasm"/>
    <property type="evidence" value="ECO:0007669"/>
    <property type="project" value="UniProtKB-SubCell"/>
</dbReference>
<dbReference type="GO" id="GO:0005615">
    <property type="term" value="C:extracellular space"/>
    <property type="evidence" value="ECO:0000318"/>
    <property type="project" value="GO_Central"/>
</dbReference>
<dbReference type="GO" id="GO:0033981">
    <property type="term" value="F:D-dopachrome decarboxylase activity"/>
    <property type="evidence" value="ECO:0000250"/>
    <property type="project" value="UniProtKB"/>
</dbReference>
<dbReference type="GO" id="GO:0050178">
    <property type="term" value="F:phenylpyruvate tautomerase activity"/>
    <property type="evidence" value="ECO:0000318"/>
    <property type="project" value="GO_Central"/>
</dbReference>
<dbReference type="GO" id="GO:0042438">
    <property type="term" value="P:melanin biosynthetic process"/>
    <property type="evidence" value="ECO:0007669"/>
    <property type="project" value="UniProtKB-KW"/>
</dbReference>
<dbReference type="Gene3D" id="3.30.429.10">
    <property type="entry name" value="Macrophage Migration Inhibitory Factor"/>
    <property type="match status" value="1"/>
</dbReference>
<dbReference type="InterPro" id="IPR001398">
    <property type="entry name" value="Macrophage_inhib_fac"/>
</dbReference>
<dbReference type="InterPro" id="IPR019829">
    <property type="entry name" value="Macrophage_inhib_fac_CS"/>
</dbReference>
<dbReference type="InterPro" id="IPR014347">
    <property type="entry name" value="Tautomerase/MIF_sf"/>
</dbReference>
<dbReference type="PANTHER" id="PTHR11954">
    <property type="entry name" value="D-DOPACHROME DECARBOXYLASE"/>
    <property type="match status" value="1"/>
</dbReference>
<dbReference type="PANTHER" id="PTHR11954:SF22">
    <property type="entry name" value="D-DOPACHROME DECARBOXYLASE"/>
    <property type="match status" value="1"/>
</dbReference>
<dbReference type="Pfam" id="PF01187">
    <property type="entry name" value="MIF"/>
    <property type="match status" value="1"/>
</dbReference>
<dbReference type="SUPFAM" id="SSF55331">
    <property type="entry name" value="Tautomerase/MIF"/>
    <property type="match status" value="1"/>
</dbReference>
<dbReference type="PROSITE" id="PS01158">
    <property type="entry name" value="MIF"/>
    <property type="match status" value="1"/>
</dbReference>
<gene>
    <name type="primary">DDT</name>
    <name type="ORF">RCJMB04_2c16</name>
</gene>
<sequence>MPFVELETNLPAERLPPGLPLKLCEATATILGKPAERVNVTVRSGMPMVLAGSAEPCAQLLVSSIGVVGSAQQNQGHSARFFDFLTTELGLGPERIVIRFYPLEPWQIGKNRTVMTFL</sequence>
<accession>Q5ZMG0</accession>
<keyword id="KW-0007">Acetylation</keyword>
<keyword id="KW-0963">Cytoplasm</keyword>
<keyword id="KW-0456">Lyase</keyword>
<keyword id="KW-0470">Melanin biosynthesis</keyword>
<keyword id="KW-1185">Reference proteome</keyword>
<proteinExistence type="inferred from homology"/>
<comment type="function">
    <text evidence="2">Tautomerization of D-dopachrome with decarboxylation to give 5,6-dihydroxyindole (DHI).</text>
</comment>
<comment type="catalytic activity">
    <reaction evidence="2">
        <text>D-dopachrome + H(+) = 5,6-dihydroxyindole + CO2</text>
        <dbReference type="Rhea" id="RHEA:18441"/>
        <dbReference type="ChEBI" id="CHEBI:15378"/>
        <dbReference type="ChEBI" id="CHEBI:16526"/>
        <dbReference type="ChEBI" id="CHEBI:27404"/>
        <dbReference type="ChEBI" id="CHEBI:58782"/>
        <dbReference type="EC" id="4.1.1.84"/>
    </reaction>
    <physiologicalReaction direction="left-to-right" evidence="2">
        <dbReference type="Rhea" id="RHEA:18442"/>
    </physiologicalReaction>
</comment>
<comment type="subunit">
    <text evidence="2">Homotrimer.</text>
</comment>
<comment type="subcellular location">
    <subcellularLocation>
        <location evidence="2">Cytoplasm</location>
    </subcellularLocation>
</comment>
<comment type="similarity">
    <text evidence="3">Belongs to the MIF family.</text>
</comment>
<organism>
    <name type="scientific">Gallus gallus</name>
    <name type="common">Chicken</name>
    <dbReference type="NCBI Taxonomy" id="9031"/>
    <lineage>
        <taxon>Eukaryota</taxon>
        <taxon>Metazoa</taxon>
        <taxon>Chordata</taxon>
        <taxon>Craniata</taxon>
        <taxon>Vertebrata</taxon>
        <taxon>Euteleostomi</taxon>
        <taxon>Archelosauria</taxon>
        <taxon>Archosauria</taxon>
        <taxon>Dinosauria</taxon>
        <taxon>Saurischia</taxon>
        <taxon>Theropoda</taxon>
        <taxon>Coelurosauria</taxon>
        <taxon>Aves</taxon>
        <taxon>Neognathae</taxon>
        <taxon>Galloanserae</taxon>
        <taxon>Galliformes</taxon>
        <taxon>Phasianidae</taxon>
        <taxon>Phasianinae</taxon>
        <taxon>Gallus</taxon>
    </lineage>
</organism>
<protein>
    <recommendedName>
        <fullName>D-dopachrome decarboxylase</fullName>
        <ecNumber evidence="2">4.1.1.84</ecNumber>
    </recommendedName>
    <alternativeName>
        <fullName>D-dopachrome tautomerase</fullName>
    </alternativeName>
</protein>
<name>DOPD_CHICK</name>
<feature type="initiator methionine" description="Removed" evidence="1">
    <location>
        <position position="1"/>
    </location>
</feature>
<feature type="chain" id="PRO_0000337234" description="D-dopachrome decarboxylase">
    <location>
        <begin position="2"/>
        <end position="118"/>
    </location>
</feature>
<feature type="modified residue" description="N-acetylproline" evidence="1">
    <location>
        <position position="2"/>
    </location>
</feature>
<reference key="1">
    <citation type="journal article" date="2005" name="Genome Biol.">
        <title>Full-length cDNAs from chicken bursal lymphocytes to facilitate gene function analysis.</title>
        <authorList>
            <person name="Caldwell R.B."/>
            <person name="Kierzek A.M."/>
            <person name="Arakawa H."/>
            <person name="Bezzubov Y."/>
            <person name="Zaim J."/>
            <person name="Fiedler P."/>
            <person name="Kutter S."/>
            <person name="Blagodatski A."/>
            <person name="Kostovska D."/>
            <person name="Koter M."/>
            <person name="Plachy J."/>
            <person name="Carninci P."/>
            <person name="Hayashizaki Y."/>
            <person name="Buerstedde J.-M."/>
        </authorList>
    </citation>
    <scope>NUCLEOTIDE SEQUENCE [LARGE SCALE MRNA]</scope>
    <source>
        <strain>CB</strain>
        <tissue>Bursa of Fabricius</tissue>
    </source>
</reference>
<evidence type="ECO:0000250" key="1">
    <source>
        <dbReference type="UniProtKB" id="O35215"/>
    </source>
</evidence>
<evidence type="ECO:0000250" key="2">
    <source>
        <dbReference type="UniProtKB" id="P30046"/>
    </source>
</evidence>
<evidence type="ECO:0000305" key="3"/>